<proteinExistence type="inferred from homology"/>
<protein>
    <recommendedName>
        <fullName evidence="1">Protein Nef</fullName>
    </recommendedName>
    <alternativeName>
        <fullName evidence="1">3'ORF</fullName>
    </alternativeName>
    <alternativeName>
        <fullName evidence="1">Negative factor</fullName>
        <shortName evidence="1">F-protein</shortName>
    </alternativeName>
    <component>
        <recommendedName>
            <fullName evidence="1">C-terminal core protein</fullName>
        </recommendedName>
    </component>
</protein>
<reference key="1">
    <citation type="journal article" date="1998" name="Virology">
        <title>Full genome sequences of human immunodeficiency virus type 1 subtypes G and A/G intersubtype recombinants.</title>
        <authorList>
            <person name="Carr J.K."/>
            <person name="Salminen M.O."/>
            <person name="Albert J."/>
            <person name="Sanders-Buell E."/>
            <person name="Gotte D."/>
            <person name="Birx D.L."/>
            <person name="McCutchan F.E."/>
        </authorList>
    </citation>
    <scope>NUCLEOTIDE SEQUENCE [GENOMIC DNA]</scope>
</reference>
<dbReference type="EMBL" id="AF061642">
    <property type="protein sequence ID" value="AAC29064.1"/>
    <property type="molecule type" value="Genomic_DNA"/>
</dbReference>
<dbReference type="SMR" id="O89945"/>
<dbReference type="Proteomes" id="UP000135013">
    <property type="component" value="Segment"/>
</dbReference>
<dbReference type="GO" id="GO:0005576">
    <property type="term" value="C:extracellular region"/>
    <property type="evidence" value="ECO:0007669"/>
    <property type="project" value="UniProtKB-SubCell"/>
</dbReference>
<dbReference type="GO" id="GO:0044178">
    <property type="term" value="C:host cell Golgi membrane"/>
    <property type="evidence" value="ECO:0007669"/>
    <property type="project" value="UniProtKB-SubCell"/>
</dbReference>
<dbReference type="GO" id="GO:0020002">
    <property type="term" value="C:host cell plasma membrane"/>
    <property type="evidence" value="ECO:0007669"/>
    <property type="project" value="UniProtKB-SubCell"/>
</dbReference>
<dbReference type="GO" id="GO:0016020">
    <property type="term" value="C:membrane"/>
    <property type="evidence" value="ECO:0007669"/>
    <property type="project" value="UniProtKB-UniRule"/>
</dbReference>
<dbReference type="GO" id="GO:0044423">
    <property type="term" value="C:virion component"/>
    <property type="evidence" value="ECO:0007669"/>
    <property type="project" value="UniProtKB-UniRule"/>
</dbReference>
<dbReference type="GO" id="GO:0005525">
    <property type="term" value="F:GTP binding"/>
    <property type="evidence" value="ECO:0007669"/>
    <property type="project" value="UniProtKB-UniRule"/>
</dbReference>
<dbReference type="GO" id="GO:0017124">
    <property type="term" value="F:SH3 domain binding"/>
    <property type="evidence" value="ECO:0007669"/>
    <property type="project" value="UniProtKB-UniRule"/>
</dbReference>
<dbReference type="GO" id="GO:0046776">
    <property type="term" value="P:symbiont-mediated suppression of host antigen processing and presentation of peptide antigen via MHC class I"/>
    <property type="evidence" value="ECO:0007669"/>
    <property type="project" value="UniProtKB-UniRule"/>
</dbReference>
<dbReference type="GO" id="GO:0039505">
    <property type="term" value="P:symbiont-mediated suppression of host antigen processing and presentation of peptide antigen via MHC class II"/>
    <property type="evidence" value="ECO:0007669"/>
    <property type="project" value="UniProtKB-UniRule"/>
</dbReference>
<dbReference type="GO" id="GO:0140321">
    <property type="term" value="P:symbiont-mediated suppression of host autophagy"/>
    <property type="evidence" value="ECO:0007669"/>
    <property type="project" value="UniProtKB-KW"/>
</dbReference>
<dbReference type="Gene3D" id="4.10.890.10">
    <property type="entry name" value="HIV 1 nef anchor domain"/>
    <property type="match status" value="1"/>
</dbReference>
<dbReference type="Gene3D" id="3.30.62.10">
    <property type="entry name" value="Nef Regulatory Factor"/>
    <property type="match status" value="1"/>
</dbReference>
<dbReference type="HAMAP" id="MF_04078">
    <property type="entry name" value="NEF_HIV"/>
    <property type="match status" value="1"/>
</dbReference>
<dbReference type="InterPro" id="IPR027480">
    <property type="entry name" value="HIV-1_Nef_anchor_sf"/>
</dbReference>
<dbReference type="InterPro" id="IPR027481">
    <property type="entry name" value="HIV-1_Nef_core_sf"/>
</dbReference>
<dbReference type="InterPro" id="IPR001558">
    <property type="entry name" value="HIV_Nef"/>
</dbReference>
<dbReference type="Pfam" id="PF00469">
    <property type="entry name" value="F-protein"/>
    <property type="match status" value="1"/>
</dbReference>
<dbReference type="SUPFAM" id="SSF55671">
    <property type="entry name" value="Regulatory factor Nef"/>
    <property type="match status" value="1"/>
</dbReference>
<organismHost>
    <name type="scientific">Homo sapiens</name>
    <name type="common">Human</name>
    <dbReference type="NCBI Taxonomy" id="9606"/>
</organismHost>
<accession>O89945</accession>
<gene>
    <name evidence="1" type="primary">nef</name>
</gene>
<name>NEF_HV1SE</name>
<comment type="function">
    <text evidence="1">Factor of infectivity and pathogenicity, required for optimal virus replication. Alters numerous pathways of T-lymphocyte function and down-regulates immunity surface molecules in order to evade host defense and increase viral infectivity. Alters the functionality of other immunity cells, like dendritic cells, monocytes/macrophages and NK cells.</text>
</comment>
<comment type="function">
    <text evidence="1">In infected CD4(+) T-lymphocytes, down-regulates the surface MHC-I, mature MHC-II, CD4, CD28, CCR5 and CXCR4 molecules. Mediates internalization and degradation of host CD4 through the interaction of with the cytoplasmic tail of CD4, the recruitment of AP-2 (clathrin adapter protein complex 2), internalization through clathrin coated pits, and subsequent transport to endosomes and lysosomes for degradation. Diverts host MHC-I molecules to the trans-Golgi network-associated endosomal compartments by an endocytic pathway to finally target them for degradation. MHC-I down-regulation may involve AP-1 (clathrin adapter protein complex 1) or possibly Src family kinase-ZAP70/Syk-PI3K cascade recruited by PACS2. In consequence infected cells are masked for immune recognition by cytotoxic T-lymphocytes. Decreasing the number of immune receptors also prevents reinfection by more HIV particles (superinfection). Down-regulates host SERINC3 and SERINC5 thereby excluding these proteins from the viral particles. Virion infectivity is drastically higher when SERINC3 or SERINC5 are excluded from the viral envelope, because these host antiviral proteins impair the membrane fusion event necessary for subsequent virion penetration.</text>
</comment>
<comment type="function">
    <text evidence="1">Bypasses host T-cell signaling by inducing a transcriptional program nearly identical to that of anti-CD3 cell activation. Interaction with TCR-zeta chain up-regulates the Fas ligand (FasL). Increasing surface FasL molecules and decreasing surface MHC-I molecules on infected CD4(+) cells send attacking cytotoxic CD8+ T-lymphocytes into apoptosis.</text>
</comment>
<comment type="function">
    <text evidence="1">Plays a role in optimizing the host cell environment for viral replication without causing cell death by apoptosis. Protects the infected cells from apoptosis in order to keep them alive until the next virus generation is ready to strike. Inhibits the Fas and TNFR-mediated death signals by blocking MAP3K5/ASK1. Decreases the half-life of TP53, protecting the infected cell against p53-mediated apoptosis. Inhibits the apoptotic signals regulated by the Bcl-2 family proteins through the formation of a Nef/PI3-kinase/PAK2 complex that leads to activation of PAK2 and induces phosphorylation of host BAD.</text>
</comment>
<comment type="function">
    <text evidence="1">Extracellular Nef protein targets CD4(+) T-lymphocytes for apoptosis by interacting with CXCR4 surface receptors.</text>
</comment>
<comment type="subunit">
    <text evidence="1">Monomer; cytosolic form. Homodimer; membrane bound form. Interacts with Nef associated p21-activated kinase (PAK2); this interaction activates PAK2. Associates with the Nef-MHC-I-AP1 complex; this complex is required for MHC-I internalization. Interacts (via C-terminus) with host PI3-kinase. Interacts with host PACS1; this interaction seems to be weak. Interacts with host PACS2. Interacts with host LCK and MAPK3; these interactions inhibit the kinase activity of the latter. Interacts with host ATP6V1H; this interaction may play a role in CD4 endocytosis. Associates with the CD4-Nef-AP2 complex; this complex is required for CD4 internalization. Interacts with host AP2 subunit alpha and AP2 subunit sigma2. Interacts with TCR-zeta chain; this interaction up-regulates the Fas ligand (FasL) surface expression. Interacts with host HCK, LYN, and SRC; these interactions activate the Src family kinases. Interacts with MAP3K5; this interaction inhibits the Fas and TNFR-mediated death signals. Interacts with beta-COP and PTE1. Interacts with human RACK1; this increases Nef phosphorylation by PKC. Interacts with TP53; this interaction decreases the half-life of TP53, protecting the infected cell against p53-mediated apoptosis.</text>
</comment>
<comment type="subcellular location">
    <subcellularLocation>
        <location evidence="1">Host cell membrane</location>
        <topology evidence="1">Lipid-anchor</topology>
        <orientation evidence="1">Cytoplasmic side</orientation>
    </subcellularLocation>
    <subcellularLocation>
        <location evidence="1">Virion</location>
    </subcellularLocation>
    <subcellularLocation>
        <location evidence="1">Secreted</location>
    </subcellularLocation>
    <subcellularLocation>
        <location evidence="1">Host Golgi apparatus membrane</location>
    </subcellularLocation>
    <text evidence="1">TGN localization requires PACS1. Associates with the inner plasma membrane through its N-terminal domain. Nef stimulates its own export via the release of exosomes. Incorporated in virions at a rate of about 10 molecules per virion, where it is cleaved.</text>
</comment>
<comment type="induction">
    <text evidence="1">Expressed early in the viral replication cycle.</text>
</comment>
<comment type="domain">
    <text evidence="1">The N-terminal domain is composed of the N-myristoyl glycine and of a cluster of positively charged amino acids. It is required for inner plasma membrane targeting of Nef and virion incorporation, and thereby for infectivity. This domain is also involved in binding to TP53.</text>
</comment>
<comment type="domain">
    <text evidence="1">The SH3-binding domain constituted of PxxP motifs mediates binding to several Src family proteins thereby regulating their tyrosine kinase activity. The same motifs also mediates the association with MAPK3, PI3-kinase and TCR-zeta.</text>
</comment>
<comment type="domain">
    <text evidence="1">The dileucine internalization motif and a diacidic motif seem to be required for binding to AP-2.</text>
</comment>
<comment type="domain">
    <text evidence="1">The acidic region binds to the sorting protein PACS-2, which targets Nef to the paranuclear region, enabling the PxxP motif to direct assembly of an SFK/ZAP-70/PI3K complex that accelerates endocytosis of cell-surface MHC-I.</text>
</comment>
<comment type="PTM">
    <text evidence="1">The virion-associated Nef proteins are cleaved by the viral protease to release the soluble C-terminal core protein. Nef is probably cleaved concomitantly with viral structural proteins on maturation of virus particles.</text>
</comment>
<comment type="PTM">
    <text evidence="1">Myristoylated.</text>
</comment>
<comment type="PTM">
    <text evidence="1">Phosphorylated on serine residues, probably by host PKCdelta and theta.</text>
</comment>
<comment type="miscellaneous">
    <text evidence="1">HIV-1 lineages are divided in three main groups, M (for Major), O (for Outlier), and N (for New, or Non-M, Non-O). The vast majority of strains found worldwide belong to the group M. Group O seems to be endemic to and largely confined to Cameroon and neighboring countries in West Central Africa, where these viruses represent a small minority of HIV-1 strains. The group N is represented by a limited number of isolates from Cameroonian persons. The group M is further subdivided in 9 clades or subtypes (A to D, F to H, J and K).</text>
</comment>
<comment type="similarity">
    <text evidence="1">Belongs to the lentivirus primate group Nef protein family.</text>
</comment>
<organism>
    <name type="scientific">Human immunodeficiency virus type 1 group M subtype G (isolate SE6165)</name>
    <name type="common">HIV-1</name>
    <dbReference type="NCBI Taxonomy" id="388824"/>
    <lineage>
        <taxon>Viruses</taxon>
        <taxon>Riboviria</taxon>
        <taxon>Pararnavirae</taxon>
        <taxon>Artverviricota</taxon>
        <taxon>Revtraviricetes</taxon>
        <taxon>Ortervirales</taxon>
        <taxon>Retroviridae</taxon>
        <taxon>Orthoretrovirinae</taxon>
        <taxon>Lentivirus</taxon>
        <taxon>Human immunodeficiency virus type 1</taxon>
    </lineage>
</organism>
<keyword id="KW-0014">AIDS</keyword>
<keyword id="KW-0053">Apoptosis</keyword>
<keyword id="KW-0244">Early protein</keyword>
<keyword id="KW-1032">Host cell membrane</keyword>
<keyword id="KW-1040">Host Golgi apparatus</keyword>
<keyword id="KW-1043">Host membrane</keyword>
<keyword id="KW-0945">Host-virus interaction</keyword>
<keyword id="KW-1080">Inhibition of host adaptive immune response by virus</keyword>
<keyword id="KW-1083">Inhibition of host autophagy by virus</keyword>
<keyword id="KW-1115">Inhibition of host MHC class I molecule presentation by virus</keyword>
<keyword id="KW-1116">Inhibition of host MHC class II molecule presentation by virus</keyword>
<keyword id="KW-0449">Lipoprotein</keyword>
<keyword id="KW-0472">Membrane</keyword>
<keyword id="KW-0519">Myristate</keyword>
<keyword id="KW-0597">Phosphoprotein</keyword>
<keyword id="KW-0964">Secreted</keyword>
<keyword id="KW-0729">SH3-binding</keyword>
<keyword id="KW-0899">Viral immunoevasion</keyword>
<keyword id="KW-0946">Virion</keyword>
<keyword id="KW-0843">Virulence</keyword>
<feature type="initiator methionine" description="Removed; by host" evidence="1">
    <location>
        <position position="1"/>
    </location>
</feature>
<feature type="chain" id="PRO_0000244803" description="Protein Nef" evidence="1">
    <location>
        <begin position="2"/>
        <end position="207"/>
    </location>
</feature>
<feature type="chain" id="PRO_0000244804" description="C-terminal core protein" evidence="1">
    <location>
        <begin position="58"/>
        <end position="207"/>
    </location>
</feature>
<feature type="region of interest" description="Acidic; interacts with host PACS1 and PACS2; stabilizes the interaction of NEF/MHC-I with host AP1M1; necessary for MHC-I internalization" evidence="1">
    <location>
        <begin position="62"/>
        <end position="66"/>
    </location>
</feature>
<feature type="region of interest" description="SH3-binding; interaction with Src family tyrosine kinases" evidence="1">
    <location>
        <begin position="70"/>
        <end position="79"/>
    </location>
</feature>
<feature type="region of interest" description="Mediates dimerization, Nef-PTE1 interaction" evidence="1">
    <location>
        <begin position="109"/>
        <end position="125"/>
    </location>
</feature>
<feature type="region of interest" description="Binding to ATP6V1H" evidence="1">
    <location>
        <begin position="149"/>
        <end position="181"/>
    </location>
</feature>
<feature type="short sequence motif" description="PxxP; stabilizes the interaction of NEF/MHC-I with host AP1M1; necessary for MHC-I internalization" evidence="1">
    <location>
        <begin position="73"/>
        <end position="76"/>
    </location>
</feature>
<feature type="short sequence motif" description="Dileucine internalization motif; necessary for CD4 internalization" evidence="1">
    <location>
        <begin position="165"/>
        <end position="166"/>
    </location>
</feature>
<feature type="short sequence motif" description="Diacidic; necessary for CD4 internalization" evidence="1">
    <location>
        <begin position="175"/>
        <end position="176"/>
    </location>
</feature>
<feature type="site" description="Cleavage; by viral protease" evidence="1">
    <location>
        <begin position="57"/>
        <end position="58"/>
    </location>
</feature>
<feature type="modified residue" description="Phosphoserine; by host" evidence="1">
    <location>
        <position position="6"/>
    </location>
</feature>
<feature type="lipid moiety-binding region" description="N-myristoyl glycine; by host" evidence="1">
    <location>
        <position position="2"/>
    </location>
</feature>
<sequence>MGGKWSKSSIVGWPEVRERIRNTPTAAEGVGAVSQDLDRHGAITSSNTAANNPDCAWLEAQEEDSEVGFPVRPQVPLRPMTFKGAFDLSFFLKEKGGLDGLIYSKKRQEILDLWVYNTQGYFPDWQNYTPGPGTRFPLTFGWCFKLVPMDPAEVEEANKGENNSLLHPICQHGMEDEDREVLVWRFDSSLARRHIARELHPEYYKDC</sequence>
<evidence type="ECO:0000255" key="1">
    <source>
        <dbReference type="HAMAP-Rule" id="MF_04078"/>
    </source>
</evidence>